<gene>
    <name evidence="1" type="primary">glpK2</name>
    <name type="ordered locus">TM_1430</name>
</gene>
<proteinExistence type="inferred from homology"/>
<sequence>MKYVLSLDQGTTSSRAIVFDEKGNVVSKVNKEFRQIYPRPGWVEHDPVEIWESQIEVAKKAIEEAGIKPEDIAAIGITNQRETTIVWDKNTGKPVYNAIVWQCRRTAPICDELKEKGYSEFIRERTGLVIDAYFSGTKIKWILDNVEGVREKAEKGEVLFGTVDTWLIWNLTGGRVHVTDYSNASRTMIFNIHKLDWDDEILELLNIPRAMLPQVMPSSHVYGYTAKDIFGVEIPIAGDAGDQQAALFGQACFQPGMLKNTYGTGCFLLMNTGEKAFESKSGLLTTIAWGINGKVYYALEGSIFITGAAVQWLRDGLKIISNAAETEELATKVPDNGGVFFVPAFVGLGAPYWDMYARGLIIGITRGTTREHIVRAVLESIAYQTRDVVEVMEKDSDIKVETLRVDGGAVVNNFLMQFQADILGVPVERPVVNETTALGAAYLAGLAVGYWKDQEEIASLWQLDRRFEPSMNSEERERLYSKWKEAVSRSLGWEKR</sequence>
<dbReference type="EC" id="2.7.1.30" evidence="1"/>
<dbReference type="EMBL" id="AE000512">
    <property type="protein sequence ID" value="AAD36500.1"/>
    <property type="status" value="ALT_SEQ"/>
    <property type="molecule type" value="Genomic_DNA"/>
</dbReference>
<dbReference type="PIR" id="C72254">
    <property type="entry name" value="C72254"/>
</dbReference>
<dbReference type="RefSeq" id="NP_229230.1">
    <property type="nucleotide sequence ID" value="NC_000853.1"/>
</dbReference>
<dbReference type="SMR" id="Q9X1E4"/>
<dbReference type="FunCoup" id="Q9X1E4">
    <property type="interactions" value="263"/>
</dbReference>
<dbReference type="STRING" id="243274.TM_1430"/>
<dbReference type="EnsemblBacteria" id="AAD36500">
    <property type="protein sequence ID" value="AAD36500"/>
    <property type="gene ID" value="TM_1430"/>
</dbReference>
<dbReference type="KEGG" id="tma:TM1430"/>
<dbReference type="InParanoid" id="Q9X1E4"/>
<dbReference type="OrthoDB" id="39631at2"/>
<dbReference type="UniPathway" id="UPA00618">
    <property type="reaction ID" value="UER00672"/>
</dbReference>
<dbReference type="Proteomes" id="UP000008183">
    <property type="component" value="Chromosome"/>
</dbReference>
<dbReference type="GO" id="GO:0005829">
    <property type="term" value="C:cytosol"/>
    <property type="evidence" value="ECO:0000318"/>
    <property type="project" value="GO_Central"/>
</dbReference>
<dbReference type="GO" id="GO:0005524">
    <property type="term" value="F:ATP binding"/>
    <property type="evidence" value="ECO:0007669"/>
    <property type="project" value="UniProtKB-UniRule"/>
</dbReference>
<dbReference type="GO" id="GO:0004370">
    <property type="term" value="F:glycerol kinase activity"/>
    <property type="evidence" value="ECO:0000250"/>
    <property type="project" value="UniProtKB"/>
</dbReference>
<dbReference type="GO" id="GO:0019563">
    <property type="term" value="P:glycerol catabolic process"/>
    <property type="evidence" value="ECO:0000318"/>
    <property type="project" value="GO_Central"/>
</dbReference>
<dbReference type="GO" id="GO:0006071">
    <property type="term" value="P:glycerol metabolic process"/>
    <property type="evidence" value="ECO:0000250"/>
    <property type="project" value="UniProtKB"/>
</dbReference>
<dbReference type="GO" id="GO:0006072">
    <property type="term" value="P:glycerol-3-phosphate metabolic process"/>
    <property type="evidence" value="ECO:0007669"/>
    <property type="project" value="InterPro"/>
</dbReference>
<dbReference type="CDD" id="cd07786">
    <property type="entry name" value="FGGY_EcGK_like"/>
    <property type="match status" value="1"/>
</dbReference>
<dbReference type="FunFam" id="3.30.420.40:FF:000007">
    <property type="entry name" value="Glycerol kinase"/>
    <property type="match status" value="1"/>
</dbReference>
<dbReference type="FunFam" id="3.30.420.40:FF:000008">
    <property type="entry name" value="Glycerol kinase"/>
    <property type="match status" value="1"/>
</dbReference>
<dbReference type="Gene3D" id="3.30.420.40">
    <property type="match status" value="2"/>
</dbReference>
<dbReference type="HAMAP" id="MF_00186">
    <property type="entry name" value="Glycerol_kin"/>
    <property type="match status" value="1"/>
</dbReference>
<dbReference type="InterPro" id="IPR043129">
    <property type="entry name" value="ATPase_NBD"/>
</dbReference>
<dbReference type="InterPro" id="IPR000577">
    <property type="entry name" value="Carb_kinase_FGGY"/>
</dbReference>
<dbReference type="InterPro" id="IPR018483">
    <property type="entry name" value="Carb_kinase_FGGY_CS"/>
</dbReference>
<dbReference type="InterPro" id="IPR018485">
    <property type="entry name" value="FGGY_C"/>
</dbReference>
<dbReference type="InterPro" id="IPR018484">
    <property type="entry name" value="FGGY_N"/>
</dbReference>
<dbReference type="InterPro" id="IPR005999">
    <property type="entry name" value="Glycerol_kin"/>
</dbReference>
<dbReference type="NCBIfam" id="TIGR01311">
    <property type="entry name" value="glycerol_kin"/>
    <property type="match status" value="1"/>
</dbReference>
<dbReference type="NCBIfam" id="NF000756">
    <property type="entry name" value="PRK00047.1"/>
    <property type="match status" value="1"/>
</dbReference>
<dbReference type="PANTHER" id="PTHR10196:SF69">
    <property type="entry name" value="GLYCEROL KINASE"/>
    <property type="match status" value="1"/>
</dbReference>
<dbReference type="PANTHER" id="PTHR10196">
    <property type="entry name" value="SUGAR KINASE"/>
    <property type="match status" value="1"/>
</dbReference>
<dbReference type="Pfam" id="PF02782">
    <property type="entry name" value="FGGY_C"/>
    <property type="match status" value="1"/>
</dbReference>
<dbReference type="Pfam" id="PF00370">
    <property type="entry name" value="FGGY_N"/>
    <property type="match status" value="1"/>
</dbReference>
<dbReference type="PIRSF" id="PIRSF000538">
    <property type="entry name" value="GlpK"/>
    <property type="match status" value="1"/>
</dbReference>
<dbReference type="SUPFAM" id="SSF53067">
    <property type="entry name" value="Actin-like ATPase domain"/>
    <property type="match status" value="2"/>
</dbReference>
<dbReference type="PROSITE" id="PS00933">
    <property type="entry name" value="FGGY_KINASES_1"/>
    <property type="match status" value="1"/>
</dbReference>
<dbReference type="PROSITE" id="PS00445">
    <property type="entry name" value="FGGY_KINASES_2"/>
    <property type="match status" value="1"/>
</dbReference>
<feature type="chain" id="PRO_0000059514" description="Glycerol kinase 2">
    <location>
        <begin position="1"/>
        <end position="496"/>
    </location>
</feature>
<feature type="binding site" evidence="1">
    <location>
        <position position="11"/>
    </location>
    <ligand>
        <name>ADP</name>
        <dbReference type="ChEBI" id="CHEBI:456216"/>
    </ligand>
</feature>
<feature type="binding site" evidence="1">
    <location>
        <position position="11"/>
    </location>
    <ligand>
        <name>ATP</name>
        <dbReference type="ChEBI" id="CHEBI:30616"/>
    </ligand>
</feature>
<feature type="binding site" evidence="1">
    <location>
        <position position="11"/>
    </location>
    <ligand>
        <name>sn-glycerol 3-phosphate</name>
        <dbReference type="ChEBI" id="CHEBI:57597"/>
    </ligand>
</feature>
<feature type="binding site" evidence="1">
    <location>
        <position position="12"/>
    </location>
    <ligand>
        <name>ATP</name>
        <dbReference type="ChEBI" id="CHEBI:30616"/>
    </ligand>
</feature>
<feature type="binding site" evidence="1">
    <location>
        <position position="13"/>
    </location>
    <ligand>
        <name>ATP</name>
        <dbReference type="ChEBI" id="CHEBI:30616"/>
    </ligand>
</feature>
<feature type="binding site" evidence="1">
    <location>
        <position position="15"/>
    </location>
    <ligand>
        <name>ADP</name>
        <dbReference type="ChEBI" id="CHEBI:456216"/>
    </ligand>
</feature>
<feature type="binding site" evidence="1">
    <location>
        <position position="81"/>
    </location>
    <ligand>
        <name>glycerol</name>
        <dbReference type="ChEBI" id="CHEBI:17754"/>
    </ligand>
</feature>
<feature type="binding site" evidence="1">
    <location>
        <position position="81"/>
    </location>
    <ligand>
        <name>sn-glycerol 3-phosphate</name>
        <dbReference type="ChEBI" id="CHEBI:57597"/>
    </ligand>
</feature>
<feature type="binding site" evidence="1">
    <location>
        <position position="82"/>
    </location>
    <ligand>
        <name>glycerol</name>
        <dbReference type="ChEBI" id="CHEBI:17754"/>
    </ligand>
</feature>
<feature type="binding site" evidence="1">
    <location>
        <position position="82"/>
    </location>
    <ligand>
        <name>sn-glycerol 3-phosphate</name>
        <dbReference type="ChEBI" id="CHEBI:57597"/>
    </ligand>
</feature>
<feature type="binding site" evidence="1">
    <location>
        <position position="133"/>
    </location>
    <ligand>
        <name>glycerol</name>
        <dbReference type="ChEBI" id="CHEBI:17754"/>
    </ligand>
</feature>
<feature type="binding site" evidence="1">
    <location>
        <position position="133"/>
    </location>
    <ligand>
        <name>sn-glycerol 3-phosphate</name>
        <dbReference type="ChEBI" id="CHEBI:57597"/>
    </ligand>
</feature>
<feature type="binding site" evidence="1">
    <location>
        <position position="242"/>
    </location>
    <ligand>
        <name>glycerol</name>
        <dbReference type="ChEBI" id="CHEBI:17754"/>
    </ligand>
</feature>
<feature type="binding site" evidence="1">
    <location>
        <position position="242"/>
    </location>
    <ligand>
        <name>sn-glycerol 3-phosphate</name>
        <dbReference type="ChEBI" id="CHEBI:57597"/>
    </ligand>
</feature>
<feature type="binding site" evidence="1">
    <location>
        <position position="243"/>
    </location>
    <ligand>
        <name>glycerol</name>
        <dbReference type="ChEBI" id="CHEBI:17754"/>
    </ligand>
</feature>
<feature type="binding site" evidence="1">
    <location>
        <position position="264"/>
    </location>
    <ligand>
        <name>ADP</name>
        <dbReference type="ChEBI" id="CHEBI:456216"/>
    </ligand>
</feature>
<feature type="binding site" evidence="1">
    <location>
        <position position="264"/>
    </location>
    <ligand>
        <name>ATP</name>
        <dbReference type="ChEBI" id="CHEBI:30616"/>
    </ligand>
</feature>
<feature type="binding site" evidence="1">
    <location>
        <position position="307"/>
    </location>
    <ligand>
        <name>ADP</name>
        <dbReference type="ChEBI" id="CHEBI:456216"/>
    </ligand>
</feature>
<feature type="binding site" evidence="1">
    <location>
        <position position="307"/>
    </location>
    <ligand>
        <name>ATP</name>
        <dbReference type="ChEBI" id="CHEBI:30616"/>
    </ligand>
</feature>
<feature type="binding site" evidence="1">
    <location>
        <position position="311"/>
    </location>
    <ligand>
        <name>ATP</name>
        <dbReference type="ChEBI" id="CHEBI:30616"/>
    </ligand>
</feature>
<feature type="binding site" evidence="1">
    <location>
        <position position="408"/>
    </location>
    <ligand>
        <name>ADP</name>
        <dbReference type="ChEBI" id="CHEBI:456216"/>
    </ligand>
</feature>
<feature type="binding site" evidence="1">
    <location>
        <position position="408"/>
    </location>
    <ligand>
        <name>ATP</name>
        <dbReference type="ChEBI" id="CHEBI:30616"/>
    </ligand>
</feature>
<feature type="binding site" evidence="1">
    <location>
        <position position="412"/>
    </location>
    <ligand>
        <name>ADP</name>
        <dbReference type="ChEBI" id="CHEBI:456216"/>
    </ligand>
</feature>
<protein>
    <recommendedName>
        <fullName evidence="1">Glycerol kinase 2</fullName>
        <ecNumber evidence="1">2.7.1.30</ecNumber>
    </recommendedName>
    <alternativeName>
        <fullName evidence="1">ATP:glycerol 3-phosphotransferase 2</fullName>
    </alternativeName>
    <alternativeName>
        <fullName evidence="1">Glycerokinase 2</fullName>
        <shortName evidence="1">GK 2</shortName>
    </alternativeName>
</protein>
<name>GLPK2_THEMA</name>
<evidence type="ECO:0000255" key="1">
    <source>
        <dbReference type="HAMAP-Rule" id="MF_00186"/>
    </source>
</evidence>
<evidence type="ECO:0000305" key="2"/>
<reference key="1">
    <citation type="journal article" date="1999" name="Nature">
        <title>Evidence for lateral gene transfer between Archaea and Bacteria from genome sequence of Thermotoga maritima.</title>
        <authorList>
            <person name="Nelson K.E."/>
            <person name="Clayton R.A."/>
            <person name="Gill S.R."/>
            <person name="Gwinn M.L."/>
            <person name="Dodson R.J."/>
            <person name="Haft D.H."/>
            <person name="Hickey E.K."/>
            <person name="Peterson J.D."/>
            <person name="Nelson W.C."/>
            <person name="Ketchum K.A."/>
            <person name="McDonald L.A."/>
            <person name="Utterback T.R."/>
            <person name="Malek J.A."/>
            <person name="Linher K.D."/>
            <person name="Garrett M.M."/>
            <person name="Stewart A.M."/>
            <person name="Cotton M.D."/>
            <person name="Pratt M.S."/>
            <person name="Phillips C.A."/>
            <person name="Richardson D.L."/>
            <person name="Heidelberg J.F."/>
            <person name="Sutton G.G."/>
            <person name="Fleischmann R.D."/>
            <person name="Eisen J.A."/>
            <person name="White O."/>
            <person name="Salzberg S.L."/>
            <person name="Smith H.O."/>
            <person name="Venter J.C."/>
            <person name="Fraser C.M."/>
        </authorList>
    </citation>
    <scope>NUCLEOTIDE SEQUENCE [LARGE SCALE GENOMIC DNA]</scope>
    <source>
        <strain>ATCC 43589 / DSM 3109 / JCM 10099 / NBRC 100826 / MSB8</strain>
    </source>
</reference>
<comment type="function">
    <text evidence="1">Key enzyme in the regulation of glycerol uptake and metabolism. Catalyzes the phosphorylation of glycerol to yield sn-glycerol 3-phosphate.</text>
</comment>
<comment type="catalytic activity">
    <reaction evidence="1">
        <text>glycerol + ATP = sn-glycerol 3-phosphate + ADP + H(+)</text>
        <dbReference type="Rhea" id="RHEA:21644"/>
        <dbReference type="ChEBI" id="CHEBI:15378"/>
        <dbReference type="ChEBI" id="CHEBI:17754"/>
        <dbReference type="ChEBI" id="CHEBI:30616"/>
        <dbReference type="ChEBI" id="CHEBI:57597"/>
        <dbReference type="ChEBI" id="CHEBI:456216"/>
        <dbReference type="EC" id="2.7.1.30"/>
    </reaction>
</comment>
<comment type="activity regulation">
    <text evidence="1">Inhibited by fructose 1,6-bisphosphate (FBP).</text>
</comment>
<comment type="pathway">
    <text evidence="1">Polyol metabolism; glycerol degradation via glycerol kinase pathway; sn-glycerol 3-phosphate from glycerol: step 1/1.</text>
</comment>
<comment type="similarity">
    <text evidence="1">Belongs to the FGGY kinase family.</text>
</comment>
<comment type="sequence caution" evidence="2">
    <conflict type="erroneous termination">
        <sequence resource="EMBL-CDS" id="AAD36500"/>
    </conflict>
    <text>Truncated C-terminus.</text>
</comment>
<organism>
    <name type="scientific">Thermotoga maritima (strain ATCC 43589 / DSM 3109 / JCM 10099 / NBRC 100826 / MSB8)</name>
    <dbReference type="NCBI Taxonomy" id="243274"/>
    <lineage>
        <taxon>Bacteria</taxon>
        <taxon>Thermotogati</taxon>
        <taxon>Thermotogota</taxon>
        <taxon>Thermotogae</taxon>
        <taxon>Thermotogales</taxon>
        <taxon>Thermotogaceae</taxon>
        <taxon>Thermotoga</taxon>
    </lineage>
</organism>
<accession>Q9X1E4</accession>
<keyword id="KW-0067">ATP-binding</keyword>
<keyword id="KW-0319">Glycerol metabolism</keyword>
<keyword id="KW-0418">Kinase</keyword>
<keyword id="KW-0547">Nucleotide-binding</keyword>
<keyword id="KW-1185">Reference proteome</keyword>
<keyword id="KW-0808">Transferase</keyword>